<accession>A6VUR6</accession>
<reference key="1">
    <citation type="submission" date="2007-06" db="EMBL/GenBank/DDBJ databases">
        <title>Complete sequence of Marinomonas sp. MWYL1.</title>
        <authorList>
            <consortium name="US DOE Joint Genome Institute"/>
            <person name="Copeland A."/>
            <person name="Lucas S."/>
            <person name="Lapidus A."/>
            <person name="Barry K."/>
            <person name="Glavina del Rio T."/>
            <person name="Dalin E."/>
            <person name="Tice H."/>
            <person name="Pitluck S."/>
            <person name="Kiss H."/>
            <person name="Brettin T."/>
            <person name="Bruce D."/>
            <person name="Detter J.C."/>
            <person name="Han C."/>
            <person name="Schmutz J."/>
            <person name="Larimer F."/>
            <person name="Land M."/>
            <person name="Hauser L."/>
            <person name="Kyrpides N."/>
            <person name="Kim E."/>
            <person name="Johnston A.W.B."/>
            <person name="Todd J.D."/>
            <person name="Rogers R."/>
            <person name="Wexler M."/>
            <person name="Bond P.L."/>
            <person name="Li Y."/>
            <person name="Richardson P."/>
        </authorList>
    </citation>
    <scope>NUCLEOTIDE SEQUENCE [LARGE SCALE GENOMIC DNA]</scope>
    <source>
        <strain>MWYL1</strain>
    </source>
</reference>
<comment type="function">
    <text evidence="1">Catalyzes the hydrolysis of N-succinyl-L,L-diaminopimelic acid (SDAP), forming succinate and LL-2,6-diaminopimelate (DAP), an intermediate involved in the bacterial biosynthesis of lysine and meso-diaminopimelic acid, an essential component of bacterial cell walls.</text>
</comment>
<comment type="catalytic activity">
    <reaction evidence="1">
        <text>N-succinyl-(2S,6S)-2,6-diaminopimelate + H2O = (2S,6S)-2,6-diaminopimelate + succinate</text>
        <dbReference type="Rhea" id="RHEA:22608"/>
        <dbReference type="ChEBI" id="CHEBI:15377"/>
        <dbReference type="ChEBI" id="CHEBI:30031"/>
        <dbReference type="ChEBI" id="CHEBI:57609"/>
        <dbReference type="ChEBI" id="CHEBI:58087"/>
        <dbReference type="EC" id="3.5.1.18"/>
    </reaction>
</comment>
<comment type="cofactor">
    <cofactor evidence="1">
        <name>Zn(2+)</name>
        <dbReference type="ChEBI" id="CHEBI:29105"/>
    </cofactor>
    <cofactor evidence="1">
        <name>Co(2+)</name>
        <dbReference type="ChEBI" id="CHEBI:48828"/>
    </cofactor>
    <text evidence="1">Binds 2 Zn(2+) or Co(2+) ions per subunit.</text>
</comment>
<comment type="pathway">
    <text evidence="1">Amino-acid biosynthesis; L-lysine biosynthesis via DAP pathway; LL-2,6-diaminopimelate from (S)-tetrahydrodipicolinate (succinylase route): step 3/3.</text>
</comment>
<comment type="subunit">
    <text evidence="1">Homodimer.</text>
</comment>
<comment type="similarity">
    <text evidence="1">Belongs to the peptidase M20A family. DapE subfamily.</text>
</comment>
<comment type="sequence caution" evidence="2">
    <conflict type="erroneous initiation">
        <sequence resource="EMBL-CDS" id="ABR70195"/>
    </conflict>
</comment>
<name>DAPE_MARMS</name>
<proteinExistence type="inferred from homology"/>
<feature type="chain" id="PRO_0000375608" description="Succinyl-diaminopimelate desuccinylase">
    <location>
        <begin position="1"/>
        <end position="377"/>
    </location>
</feature>
<feature type="active site" evidence="1">
    <location>
        <position position="68"/>
    </location>
</feature>
<feature type="active site" description="Proton acceptor" evidence="1">
    <location>
        <position position="133"/>
    </location>
</feature>
<feature type="binding site" evidence="1">
    <location>
        <position position="66"/>
    </location>
    <ligand>
        <name>Zn(2+)</name>
        <dbReference type="ChEBI" id="CHEBI:29105"/>
        <label>1</label>
    </ligand>
</feature>
<feature type="binding site" evidence="1">
    <location>
        <position position="99"/>
    </location>
    <ligand>
        <name>Zn(2+)</name>
        <dbReference type="ChEBI" id="CHEBI:29105"/>
        <label>1</label>
    </ligand>
</feature>
<feature type="binding site" evidence="1">
    <location>
        <position position="99"/>
    </location>
    <ligand>
        <name>Zn(2+)</name>
        <dbReference type="ChEBI" id="CHEBI:29105"/>
        <label>2</label>
    </ligand>
</feature>
<feature type="binding site" evidence="1">
    <location>
        <position position="134"/>
    </location>
    <ligand>
        <name>Zn(2+)</name>
        <dbReference type="ChEBI" id="CHEBI:29105"/>
        <label>2</label>
    </ligand>
</feature>
<feature type="binding site" evidence="1">
    <location>
        <position position="162"/>
    </location>
    <ligand>
        <name>Zn(2+)</name>
        <dbReference type="ChEBI" id="CHEBI:29105"/>
        <label>1</label>
    </ligand>
</feature>
<feature type="binding site" evidence="1">
    <location>
        <position position="348"/>
    </location>
    <ligand>
        <name>Zn(2+)</name>
        <dbReference type="ChEBI" id="CHEBI:29105"/>
        <label>2</label>
    </ligand>
</feature>
<organism>
    <name type="scientific">Marinomonas sp. (strain MWYL1)</name>
    <dbReference type="NCBI Taxonomy" id="400668"/>
    <lineage>
        <taxon>Bacteria</taxon>
        <taxon>Pseudomonadati</taxon>
        <taxon>Pseudomonadota</taxon>
        <taxon>Gammaproteobacteria</taxon>
        <taxon>Oceanospirillales</taxon>
        <taxon>Oceanospirillaceae</taxon>
        <taxon>Marinomonas</taxon>
    </lineage>
</organism>
<evidence type="ECO:0000255" key="1">
    <source>
        <dbReference type="HAMAP-Rule" id="MF_01690"/>
    </source>
</evidence>
<evidence type="ECO:0000305" key="2"/>
<gene>
    <name evidence="1" type="primary">dapE</name>
    <name type="ordered locus">Mmwyl1_1266</name>
</gene>
<protein>
    <recommendedName>
        <fullName evidence="1">Succinyl-diaminopimelate desuccinylase</fullName>
        <shortName evidence="1">SDAP desuccinylase</shortName>
        <ecNumber evidence="1">3.5.1.18</ecNumber>
    </recommendedName>
    <alternativeName>
        <fullName evidence="1">N-succinyl-LL-2,6-diaminoheptanedioate amidohydrolase</fullName>
    </alternativeName>
</protein>
<dbReference type="EC" id="3.5.1.18" evidence="1"/>
<dbReference type="EMBL" id="CP000749">
    <property type="protein sequence ID" value="ABR70195.1"/>
    <property type="status" value="ALT_INIT"/>
    <property type="molecule type" value="Genomic_DNA"/>
</dbReference>
<dbReference type="SMR" id="A6VUR6"/>
<dbReference type="STRING" id="400668.Mmwyl1_1266"/>
<dbReference type="KEGG" id="mmw:Mmwyl1_1266"/>
<dbReference type="eggNOG" id="COG0624">
    <property type="taxonomic scope" value="Bacteria"/>
</dbReference>
<dbReference type="HOGENOM" id="CLU_021802_4_0_6"/>
<dbReference type="UniPathway" id="UPA00034">
    <property type="reaction ID" value="UER00021"/>
</dbReference>
<dbReference type="GO" id="GO:0008777">
    <property type="term" value="F:acetylornithine deacetylase activity"/>
    <property type="evidence" value="ECO:0007669"/>
    <property type="project" value="TreeGrafter"/>
</dbReference>
<dbReference type="GO" id="GO:0050897">
    <property type="term" value="F:cobalt ion binding"/>
    <property type="evidence" value="ECO:0007669"/>
    <property type="project" value="UniProtKB-UniRule"/>
</dbReference>
<dbReference type="GO" id="GO:0009014">
    <property type="term" value="F:succinyl-diaminopimelate desuccinylase activity"/>
    <property type="evidence" value="ECO:0007669"/>
    <property type="project" value="UniProtKB-UniRule"/>
</dbReference>
<dbReference type="GO" id="GO:0008270">
    <property type="term" value="F:zinc ion binding"/>
    <property type="evidence" value="ECO:0007669"/>
    <property type="project" value="UniProtKB-UniRule"/>
</dbReference>
<dbReference type="GO" id="GO:0019877">
    <property type="term" value="P:diaminopimelate biosynthetic process"/>
    <property type="evidence" value="ECO:0007669"/>
    <property type="project" value="UniProtKB-UniRule"/>
</dbReference>
<dbReference type="GO" id="GO:0006526">
    <property type="term" value="P:L-arginine biosynthetic process"/>
    <property type="evidence" value="ECO:0007669"/>
    <property type="project" value="TreeGrafter"/>
</dbReference>
<dbReference type="GO" id="GO:0009089">
    <property type="term" value="P:lysine biosynthetic process via diaminopimelate"/>
    <property type="evidence" value="ECO:0007669"/>
    <property type="project" value="UniProtKB-UniRule"/>
</dbReference>
<dbReference type="CDD" id="cd03891">
    <property type="entry name" value="M20_DapE_proteobac"/>
    <property type="match status" value="1"/>
</dbReference>
<dbReference type="FunFam" id="3.40.630.10:FF:000005">
    <property type="entry name" value="Succinyl-diaminopimelate desuccinylase"/>
    <property type="match status" value="1"/>
</dbReference>
<dbReference type="Gene3D" id="3.40.630.10">
    <property type="entry name" value="Zn peptidases"/>
    <property type="match status" value="2"/>
</dbReference>
<dbReference type="HAMAP" id="MF_01690">
    <property type="entry name" value="DapE"/>
    <property type="match status" value="1"/>
</dbReference>
<dbReference type="InterPro" id="IPR036264">
    <property type="entry name" value="Bact_exopeptidase_dim_dom"/>
</dbReference>
<dbReference type="InterPro" id="IPR005941">
    <property type="entry name" value="DapE_proteobac"/>
</dbReference>
<dbReference type="InterPro" id="IPR002933">
    <property type="entry name" value="Peptidase_M20"/>
</dbReference>
<dbReference type="InterPro" id="IPR011650">
    <property type="entry name" value="Peptidase_M20_dimer"/>
</dbReference>
<dbReference type="InterPro" id="IPR050072">
    <property type="entry name" value="Peptidase_M20A"/>
</dbReference>
<dbReference type="NCBIfam" id="TIGR01246">
    <property type="entry name" value="dapE_proteo"/>
    <property type="match status" value="1"/>
</dbReference>
<dbReference type="NCBIfam" id="NF009557">
    <property type="entry name" value="PRK13009.1"/>
    <property type="match status" value="1"/>
</dbReference>
<dbReference type="PANTHER" id="PTHR43808">
    <property type="entry name" value="ACETYLORNITHINE DEACETYLASE"/>
    <property type="match status" value="1"/>
</dbReference>
<dbReference type="PANTHER" id="PTHR43808:SF31">
    <property type="entry name" value="N-ACETYL-L-CITRULLINE DEACETYLASE"/>
    <property type="match status" value="1"/>
</dbReference>
<dbReference type="Pfam" id="PF07687">
    <property type="entry name" value="M20_dimer"/>
    <property type="match status" value="1"/>
</dbReference>
<dbReference type="Pfam" id="PF01546">
    <property type="entry name" value="Peptidase_M20"/>
    <property type="match status" value="1"/>
</dbReference>
<dbReference type="SUPFAM" id="SSF55031">
    <property type="entry name" value="Bacterial exopeptidase dimerisation domain"/>
    <property type="match status" value="1"/>
</dbReference>
<dbReference type="SUPFAM" id="SSF53187">
    <property type="entry name" value="Zn-dependent exopeptidases"/>
    <property type="match status" value="1"/>
</dbReference>
<dbReference type="PROSITE" id="PS00759">
    <property type="entry name" value="ARGE_DAPE_CPG2_2"/>
    <property type="match status" value="1"/>
</dbReference>
<keyword id="KW-0028">Amino-acid biosynthesis</keyword>
<keyword id="KW-0170">Cobalt</keyword>
<keyword id="KW-0220">Diaminopimelate biosynthesis</keyword>
<keyword id="KW-0378">Hydrolase</keyword>
<keyword id="KW-0457">Lysine biosynthesis</keyword>
<keyword id="KW-0479">Metal-binding</keyword>
<keyword id="KW-0862">Zinc</keyword>
<sequence>MSPTLKLALDLISRPSVTPEDAGCQDLMIERLKNIGFEIEYMPFGEVKNFYAKRGNSGPNLCFAGHTDVVPTGPEAEWKIPPFAPEIVDGVLYGRGAADMKGSLAAMVTAVENFVAKHPNHSGQISFLITSDEEGPFVDGTTRVVDALMERNEQVDWCIVGEPSSTKTLGDIIKNGRRGSFSGDLTVYGKQGHVAYPHLAENPIHLAAPALAEMASSHWDDGNDFFPPTSFQVSNIHSGTGATNVVPGKLNAQFNFRFSSELDFDALKVRVIEILDKHNLRYDIEWTYNGLPFLTRPGELVDAIVEAVQATVNITPELSTSGGTSDGRFIAKMGTQVVELGPINATIHQINECVDAESLNQLSEIYARILENLFAKK</sequence>